<comment type="function">
    <text evidence="2">The physiological role of BioH is to remove the methyl group introduced by BioC when the pimeloyl moiety is complete. It allows to synthesize pimeloyl-ACP via the fatty acid synthetic pathway through the hydrolysis of the ester bonds of pimeloyl-ACP esters.</text>
</comment>
<comment type="catalytic activity">
    <reaction evidence="2">
        <text>6-carboxyhexanoyl-[ACP] methyl ester + H2O = 6-carboxyhexanoyl-[ACP] + methanol + H(+)</text>
        <dbReference type="Rhea" id="RHEA:42700"/>
        <dbReference type="Rhea" id="RHEA-COMP:9955"/>
        <dbReference type="Rhea" id="RHEA-COMP:10186"/>
        <dbReference type="ChEBI" id="CHEBI:15377"/>
        <dbReference type="ChEBI" id="CHEBI:15378"/>
        <dbReference type="ChEBI" id="CHEBI:17790"/>
        <dbReference type="ChEBI" id="CHEBI:78846"/>
        <dbReference type="ChEBI" id="CHEBI:82735"/>
        <dbReference type="EC" id="3.1.1.85"/>
    </reaction>
</comment>
<comment type="pathway">
    <text evidence="2">Cofactor biosynthesis; biotin biosynthesis.</text>
</comment>
<comment type="subunit">
    <text evidence="2">Monomer.</text>
</comment>
<comment type="subcellular location">
    <subcellularLocation>
        <location evidence="2">Cytoplasm</location>
    </subcellularLocation>
</comment>
<comment type="similarity">
    <text evidence="2">Belongs to the AB hydrolase superfamily. Carboxylesterase BioH family.</text>
</comment>
<sequence length="264" mass="29128">MNATTPAHRPQLHIDTRGQGPDLVMLHGWGVNSAVFTPLHEQLSEYRVHYVDLPGFGLSQPIAGDLSTWVDALIHALPANAIWAGWSLGGLVATQAAIRYPSHIQGLITIASSPCFMAREEEAWPGIPPQVLSMFGEQLGQNLPKTIERFLAIQAMGSETAKDDIKQLRDLVLARPLPDAAALTQGLDMLNQIDLRPQLSAIQQPWLRIWGRLDGLVPKRVQPQMPTANHITDVMLAKASHAPFVSHMEEFLQAITPWLAQFKD</sequence>
<name>BIOH_SHESR</name>
<proteinExistence type="inferred from homology"/>
<dbReference type="EC" id="3.1.1.85" evidence="2"/>
<dbReference type="EMBL" id="CP000444">
    <property type="protein sequence ID" value="ABI44859.1"/>
    <property type="molecule type" value="Genomic_DNA"/>
</dbReference>
<dbReference type="SMR" id="Q0HPU6"/>
<dbReference type="ESTHER" id="sheon-BIOH">
    <property type="family name" value="BioH"/>
</dbReference>
<dbReference type="KEGG" id="shm:Shewmr7_3882"/>
<dbReference type="HOGENOM" id="CLU_020336_12_2_6"/>
<dbReference type="UniPathway" id="UPA00078"/>
<dbReference type="GO" id="GO:0005737">
    <property type="term" value="C:cytoplasm"/>
    <property type="evidence" value="ECO:0007669"/>
    <property type="project" value="UniProtKB-SubCell"/>
</dbReference>
<dbReference type="GO" id="GO:0016020">
    <property type="term" value="C:membrane"/>
    <property type="evidence" value="ECO:0007669"/>
    <property type="project" value="TreeGrafter"/>
</dbReference>
<dbReference type="GO" id="GO:0090499">
    <property type="term" value="F:pimelyl-[acyl-carrier protein] methyl ester esterase activity"/>
    <property type="evidence" value="ECO:0007669"/>
    <property type="project" value="UniProtKB-EC"/>
</dbReference>
<dbReference type="GO" id="GO:0009102">
    <property type="term" value="P:biotin biosynthetic process"/>
    <property type="evidence" value="ECO:0007669"/>
    <property type="project" value="UniProtKB-UniRule"/>
</dbReference>
<dbReference type="Gene3D" id="3.40.50.1820">
    <property type="entry name" value="alpha/beta hydrolase"/>
    <property type="match status" value="1"/>
</dbReference>
<dbReference type="HAMAP" id="MF_01260">
    <property type="entry name" value="Carboxylester"/>
    <property type="match status" value="1"/>
</dbReference>
<dbReference type="InterPro" id="IPR000073">
    <property type="entry name" value="AB_hydrolase_1"/>
</dbReference>
<dbReference type="InterPro" id="IPR029058">
    <property type="entry name" value="AB_hydrolase_fold"/>
</dbReference>
<dbReference type="InterPro" id="IPR050266">
    <property type="entry name" value="AB_hydrolase_sf"/>
</dbReference>
<dbReference type="InterPro" id="IPR010076">
    <property type="entry name" value="BioH"/>
</dbReference>
<dbReference type="NCBIfam" id="TIGR01738">
    <property type="entry name" value="bioH"/>
    <property type="match status" value="1"/>
</dbReference>
<dbReference type="PANTHER" id="PTHR43798:SF31">
    <property type="entry name" value="AB HYDROLASE SUPERFAMILY PROTEIN YCLE"/>
    <property type="match status" value="1"/>
</dbReference>
<dbReference type="PANTHER" id="PTHR43798">
    <property type="entry name" value="MONOACYLGLYCEROL LIPASE"/>
    <property type="match status" value="1"/>
</dbReference>
<dbReference type="Pfam" id="PF00561">
    <property type="entry name" value="Abhydrolase_1"/>
    <property type="match status" value="1"/>
</dbReference>
<dbReference type="SUPFAM" id="SSF53474">
    <property type="entry name" value="alpha/beta-Hydrolases"/>
    <property type="match status" value="1"/>
</dbReference>
<feature type="chain" id="PRO_1000067275" description="Pimeloyl-[acyl-carrier protein] methyl ester esterase">
    <location>
        <begin position="1"/>
        <end position="264"/>
    </location>
</feature>
<feature type="domain" description="AB hydrolase-1" evidence="1">
    <location>
        <begin position="23"/>
        <end position="244"/>
    </location>
</feature>
<feature type="active site" description="Nucleophile" evidence="2">
    <location>
        <position position="87"/>
    </location>
</feature>
<feature type="active site" evidence="2">
    <location>
        <position position="214"/>
    </location>
</feature>
<feature type="active site" evidence="2">
    <location>
        <position position="241"/>
    </location>
</feature>
<feature type="binding site" evidence="2">
    <location>
        <position position="29"/>
    </location>
    <ligand>
        <name>substrate</name>
    </ligand>
</feature>
<feature type="binding site" evidence="2">
    <location>
        <begin position="87"/>
        <end position="88"/>
    </location>
    <ligand>
        <name>substrate</name>
    </ligand>
</feature>
<feature type="binding site" evidence="2">
    <location>
        <begin position="150"/>
        <end position="154"/>
    </location>
    <ligand>
        <name>substrate</name>
    </ligand>
</feature>
<feature type="binding site" evidence="2">
    <location>
        <position position="241"/>
    </location>
    <ligand>
        <name>substrate</name>
    </ligand>
</feature>
<accession>Q0HPU6</accession>
<protein>
    <recommendedName>
        <fullName evidence="2">Pimeloyl-[acyl-carrier protein] methyl ester esterase</fullName>
        <ecNumber evidence="2">3.1.1.85</ecNumber>
    </recommendedName>
    <alternativeName>
        <fullName evidence="2">Biotin synthesis protein BioH</fullName>
    </alternativeName>
    <alternativeName>
        <fullName evidence="2">Carboxylesterase BioH</fullName>
    </alternativeName>
</protein>
<organism>
    <name type="scientific">Shewanella sp. (strain MR-7)</name>
    <dbReference type="NCBI Taxonomy" id="60481"/>
    <lineage>
        <taxon>Bacteria</taxon>
        <taxon>Pseudomonadati</taxon>
        <taxon>Pseudomonadota</taxon>
        <taxon>Gammaproteobacteria</taxon>
        <taxon>Alteromonadales</taxon>
        <taxon>Shewanellaceae</taxon>
        <taxon>Shewanella</taxon>
    </lineage>
</organism>
<keyword id="KW-0093">Biotin biosynthesis</keyword>
<keyword id="KW-0963">Cytoplasm</keyword>
<keyword id="KW-0378">Hydrolase</keyword>
<keyword id="KW-0719">Serine esterase</keyword>
<gene>
    <name evidence="2" type="primary">bioH</name>
    <name type="ordered locus">Shewmr7_3882</name>
</gene>
<evidence type="ECO:0000255" key="1"/>
<evidence type="ECO:0000255" key="2">
    <source>
        <dbReference type="HAMAP-Rule" id="MF_01260"/>
    </source>
</evidence>
<reference key="1">
    <citation type="submission" date="2006-08" db="EMBL/GenBank/DDBJ databases">
        <title>Complete sequence of chromosome 1 of Shewanella sp. MR-7.</title>
        <authorList>
            <person name="Copeland A."/>
            <person name="Lucas S."/>
            <person name="Lapidus A."/>
            <person name="Barry K."/>
            <person name="Detter J.C."/>
            <person name="Glavina del Rio T."/>
            <person name="Hammon N."/>
            <person name="Israni S."/>
            <person name="Dalin E."/>
            <person name="Tice H."/>
            <person name="Pitluck S."/>
            <person name="Kiss H."/>
            <person name="Brettin T."/>
            <person name="Bruce D."/>
            <person name="Han C."/>
            <person name="Tapia R."/>
            <person name="Gilna P."/>
            <person name="Schmutz J."/>
            <person name="Larimer F."/>
            <person name="Land M."/>
            <person name="Hauser L."/>
            <person name="Kyrpides N."/>
            <person name="Mikhailova N."/>
            <person name="Nealson K."/>
            <person name="Konstantinidis K."/>
            <person name="Klappenbach J."/>
            <person name="Tiedje J."/>
            <person name="Richardson P."/>
        </authorList>
    </citation>
    <scope>NUCLEOTIDE SEQUENCE [LARGE SCALE GENOMIC DNA]</scope>
    <source>
        <strain>MR-7</strain>
    </source>
</reference>